<accession>Q7CCK6</accession>
<reference key="1">
    <citation type="journal article" date="2003" name="Mol. Microbiol.">
        <title>Genome-based analysis of virulence genes in a non-biofilm-forming Staphylococcus epidermidis strain (ATCC 12228).</title>
        <authorList>
            <person name="Zhang Y.-Q."/>
            <person name="Ren S.-X."/>
            <person name="Li H.-L."/>
            <person name="Wang Y.-X."/>
            <person name="Fu G."/>
            <person name="Yang J."/>
            <person name="Qin Z.-Q."/>
            <person name="Miao Y.-G."/>
            <person name="Wang W.-Y."/>
            <person name="Chen R.-S."/>
            <person name="Shen Y."/>
            <person name="Chen Z."/>
            <person name="Yuan Z.-H."/>
            <person name="Zhao G.-P."/>
            <person name="Qu D."/>
            <person name="Danchin A."/>
            <person name="Wen Y.-M."/>
        </authorList>
    </citation>
    <scope>NUCLEOTIDE SEQUENCE [LARGE SCALE GENOMIC DNA]</scope>
    <source>
        <strain>ATCC 12228 / FDA PCI 1200</strain>
    </source>
</reference>
<keyword id="KW-0677">Repeat</keyword>
<feature type="chain" id="PRO_0000352616" description="Protein GlcT">
    <location>
        <begin position="1"/>
        <end position="282"/>
    </location>
</feature>
<feature type="domain" description="PRD 1" evidence="1">
    <location>
        <begin position="68"/>
        <end position="173"/>
    </location>
</feature>
<feature type="domain" description="PRD 2" evidence="1">
    <location>
        <begin position="174"/>
        <end position="282"/>
    </location>
</feature>
<gene>
    <name type="primary">glcT</name>
    <name type="ordered locus">SE_1039</name>
</gene>
<dbReference type="EMBL" id="AE015929">
    <property type="protein sequence ID" value="AAO04636.1"/>
    <property type="molecule type" value="Genomic_DNA"/>
</dbReference>
<dbReference type="RefSeq" id="NP_764594.1">
    <property type="nucleotide sequence ID" value="NC_004461.1"/>
</dbReference>
<dbReference type="RefSeq" id="WP_002456203.1">
    <property type="nucleotide sequence ID" value="NZ_WBME01000040.1"/>
</dbReference>
<dbReference type="SMR" id="Q7CCK6"/>
<dbReference type="KEGG" id="sep:SE_1039"/>
<dbReference type="PATRIC" id="fig|176280.10.peg.1014"/>
<dbReference type="eggNOG" id="COG3711">
    <property type="taxonomic scope" value="Bacteria"/>
</dbReference>
<dbReference type="HOGENOM" id="CLU_078802_0_0_9"/>
<dbReference type="OrthoDB" id="9813552at2"/>
<dbReference type="Proteomes" id="UP000001411">
    <property type="component" value="Chromosome"/>
</dbReference>
<dbReference type="GO" id="GO:0003723">
    <property type="term" value="F:RNA binding"/>
    <property type="evidence" value="ECO:0007669"/>
    <property type="project" value="InterPro"/>
</dbReference>
<dbReference type="GO" id="GO:0045893">
    <property type="term" value="P:positive regulation of DNA-templated transcription"/>
    <property type="evidence" value="ECO:0007669"/>
    <property type="project" value="InterPro"/>
</dbReference>
<dbReference type="Gene3D" id="1.20.58.1950">
    <property type="match status" value="1"/>
</dbReference>
<dbReference type="Gene3D" id="1.20.890.100">
    <property type="match status" value="1"/>
</dbReference>
<dbReference type="Gene3D" id="2.30.24.10">
    <property type="entry name" value="CAT RNA-binding domain"/>
    <property type="match status" value="1"/>
</dbReference>
<dbReference type="Gene3D" id="1.10.1790.10">
    <property type="entry name" value="PRD domain"/>
    <property type="match status" value="1"/>
</dbReference>
<dbReference type="InterPro" id="IPR050661">
    <property type="entry name" value="BglG_antiterminators"/>
</dbReference>
<dbReference type="InterPro" id="IPR004341">
    <property type="entry name" value="CAT_RNA-bd_dom"/>
</dbReference>
<dbReference type="InterPro" id="IPR036650">
    <property type="entry name" value="CAT_RNA-bd_dom_sf"/>
</dbReference>
<dbReference type="InterPro" id="IPR011608">
    <property type="entry name" value="PRD"/>
</dbReference>
<dbReference type="InterPro" id="IPR036634">
    <property type="entry name" value="PRD_sf"/>
</dbReference>
<dbReference type="InterPro" id="IPR001550">
    <property type="entry name" value="Transcrpt_antitermin_CS"/>
</dbReference>
<dbReference type="NCBIfam" id="NF047357">
    <property type="entry name" value="antiterm_GlcT"/>
    <property type="match status" value="1"/>
</dbReference>
<dbReference type="PANTHER" id="PTHR30185">
    <property type="entry name" value="CRYPTIC BETA-GLUCOSIDE BGL OPERON ANTITERMINATOR"/>
    <property type="match status" value="1"/>
</dbReference>
<dbReference type="PANTHER" id="PTHR30185:SF16">
    <property type="entry name" value="PROTEIN GLCT"/>
    <property type="match status" value="1"/>
</dbReference>
<dbReference type="Pfam" id="PF03123">
    <property type="entry name" value="CAT_RBD"/>
    <property type="match status" value="1"/>
</dbReference>
<dbReference type="Pfam" id="PF00874">
    <property type="entry name" value="PRD"/>
    <property type="match status" value="2"/>
</dbReference>
<dbReference type="SMART" id="SM01061">
    <property type="entry name" value="CAT_RBD"/>
    <property type="match status" value="1"/>
</dbReference>
<dbReference type="SUPFAM" id="SSF63520">
    <property type="entry name" value="PTS-regulatory domain, PRD"/>
    <property type="match status" value="2"/>
</dbReference>
<dbReference type="SUPFAM" id="SSF50151">
    <property type="entry name" value="SacY-like RNA-binding domain"/>
    <property type="match status" value="1"/>
</dbReference>
<dbReference type="PROSITE" id="PS00654">
    <property type="entry name" value="PRD_1"/>
    <property type="match status" value="1"/>
</dbReference>
<dbReference type="PROSITE" id="PS51372">
    <property type="entry name" value="PRD_2"/>
    <property type="match status" value="2"/>
</dbReference>
<protein>
    <recommendedName>
        <fullName>Protein GlcT</fullName>
    </recommendedName>
</protein>
<proteinExistence type="inferred from homology"/>
<evidence type="ECO:0000255" key="1">
    <source>
        <dbReference type="PROSITE-ProRule" id="PRU00704"/>
    </source>
</evidence>
<evidence type="ECO:0000305" key="2"/>
<name>GLCT_STAES</name>
<organism>
    <name type="scientific">Staphylococcus epidermidis (strain ATCC 12228 / FDA PCI 1200)</name>
    <dbReference type="NCBI Taxonomy" id="176280"/>
    <lineage>
        <taxon>Bacteria</taxon>
        <taxon>Bacillati</taxon>
        <taxon>Bacillota</taxon>
        <taxon>Bacilli</taxon>
        <taxon>Bacillales</taxon>
        <taxon>Staphylococcaceae</taxon>
        <taxon>Staphylococcus</taxon>
    </lineage>
</organism>
<sequence length="282" mass="32873">MSKYVITKTLNNNVIICTKNHQEVVLIGKGIGFNKKVGMTVQENASIEKIYKLEQQEQQEHYKTLLELGEDHVVQAVIESVNIINESGLITDDKNLVVALTDHIIYAYKRLKQHQMITNPFVIETKHLYSNAYNVARKVIDKLNKTLDVHFPEDEIGFIALHIASNSEKLSIHDISVINKLINKSITIIETDLQHSIDKQTIQYQRFIRHIQFLIYRLTKGEYLEAQENFISMIKTMYPRSFNTAYKILKMIQREFSVYVYEAEIVYLTLHINHFEVQISSE</sequence>
<comment type="similarity">
    <text evidence="2">Belongs to the transcriptional antiterminator BglG family. GlcT subfamily.</text>
</comment>